<protein>
    <recommendedName>
        <fullName evidence="1">Shikimate kinase</fullName>
        <shortName evidence="1">SK</shortName>
        <ecNumber evidence="1">2.7.1.71</ecNumber>
    </recommendedName>
</protein>
<organism>
    <name type="scientific">Thiobacillus denitrificans (strain ATCC 25259 / T1)</name>
    <dbReference type="NCBI Taxonomy" id="292415"/>
    <lineage>
        <taxon>Bacteria</taxon>
        <taxon>Pseudomonadati</taxon>
        <taxon>Pseudomonadota</taxon>
        <taxon>Betaproteobacteria</taxon>
        <taxon>Nitrosomonadales</taxon>
        <taxon>Thiobacillaceae</taxon>
        <taxon>Thiobacillus</taxon>
    </lineage>
</organism>
<name>AROK_THIDA</name>
<keyword id="KW-0028">Amino-acid biosynthesis</keyword>
<keyword id="KW-0057">Aromatic amino acid biosynthesis</keyword>
<keyword id="KW-0067">ATP-binding</keyword>
<keyword id="KW-0963">Cytoplasm</keyword>
<keyword id="KW-0418">Kinase</keyword>
<keyword id="KW-0460">Magnesium</keyword>
<keyword id="KW-0479">Metal-binding</keyword>
<keyword id="KW-0547">Nucleotide-binding</keyword>
<keyword id="KW-1185">Reference proteome</keyword>
<keyword id="KW-0808">Transferase</keyword>
<dbReference type="EC" id="2.7.1.71" evidence="1"/>
<dbReference type="EMBL" id="CP000116">
    <property type="protein sequence ID" value="AAZ96160.1"/>
    <property type="molecule type" value="Genomic_DNA"/>
</dbReference>
<dbReference type="RefSeq" id="WP_011310720.1">
    <property type="nucleotide sequence ID" value="NC_007404.1"/>
</dbReference>
<dbReference type="SMR" id="Q3SM89"/>
<dbReference type="STRING" id="292415.Tbd_0207"/>
<dbReference type="KEGG" id="tbd:Tbd_0207"/>
<dbReference type="eggNOG" id="COG0703">
    <property type="taxonomic scope" value="Bacteria"/>
</dbReference>
<dbReference type="HOGENOM" id="CLU_057607_2_2_4"/>
<dbReference type="OrthoDB" id="9800332at2"/>
<dbReference type="UniPathway" id="UPA00053">
    <property type="reaction ID" value="UER00088"/>
</dbReference>
<dbReference type="Proteomes" id="UP000008291">
    <property type="component" value="Chromosome"/>
</dbReference>
<dbReference type="GO" id="GO:0005829">
    <property type="term" value="C:cytosol"/>
    <property type="evidence" value="ECO:0007669"/>
    <property type="project" value="TreeGrafter"/>
</dbReference>
<dbReference type="GO" id="GO:0005524">
    <property type="term" value="F:ATP binding"/>
    <property type="evidence" value="ECO:0007669"/>
    <property type="project" value="UniProtKB-UniRule"/>
</dbReference>
<dbReference type="GO" id="GO:0000287">
    <property type="term" value="F:magnesium ion binding"/>
    <property type="evidence" value="ECO:0007669"/>
    <property type="project" value="UniProtKB-UniRule"/>
</dbReference>
<dbReference type="GO" id="GO:0004765">
    <property type="term" value="F:shikimate kinase activity"/>
    <property type="evidence" value="ECO:0007669"/>
    <property type="project" value="UniProtKB-UniRule"/>
</dbReference>
<dbReference type="GO" id="GO:0008652">
    <property type="term" value="P:amino acid biosynthetic process"/>
    <property type="evidence" value="ECO:0007669"/>
    <property type="project" value="UniProtKB-KW"/>
</dbReference>
<dbReference type="GO" id="GO:0009073">
    <property type="term" value="P:aromatic amino acid family biosynthetic process"/>
    <property type="evidence" value="ECO:0007669"/>
    <property type="project" value="UniProtKB-KW"/>
</dbReference>
<dbReference type="GO" id="GO:0009423">
    <property type="term" value="P:chorismate biosynthetic process"/>
    <property type="evidence" value="ECO:0007669"/>
    <property type="project" value="UniProtKB-UniRule"/>
</dbReference>
<dbReference type="CDD" id="cd00464">
    <property type="entry name" value="SK"/>
    <property type="match status" value="1"/>
</dbReference>
<dbReference type="Gene3D" id="3.40.50.300">
    <property type="entry name" value="P-loop containing nucleotide triphosphate hydrolases"/>
    <property type="match status" value="1"/>
</dbReference>
<dbReference type="HAMAP" id="MF_00109">
    <property type="entry name" value="Shikimate_kinase"/>
    <property type="match status" value="1"/>
</dbReference>
<dbReference type="InterPro" id="IPR027417">
    <property type="entry name" value="P-loop_NTPase"/>
</dbReference>
<dbReference type="InterPro" id="IPR031322">
    <property type="entry name" value="Shikimate/glucono_kinase"/>
</dbReference>
<dbReference type="InterPro" id="IPR000623">
    <property type="entry name" value="Shikimate_kinase/TSH1"/>
</dbReference>
<dbReference type="InterPro" id="IPR023000">
    <property type="entry name" value="Shikimate_kinase_CS"/>
</dbReference>
<dbReference type="PANTHER" id="PTHR21087">
    <property type="entry name" value="SHIKIMATE KINASE"/>
    <property type="match status" value="1"/>
</dbReference>
<dbReference type="PANTHER" id="PTHR21087:SF16">
    <property type="entry name" value="SHIKIMATE KINASE 1, CHLOROPLASTIC"/>
    <property type="match status" value="1"/>
</dbReference>
<dbReference type="Pfam" id="PF01202">
    <property type="entry name" value="SKI"/>
    <property type="match status" value="1"/>
</dbReference>
<dbReference type="PRINTS" id="PR01100">
    <property type="entry name" value="SHIKIMTKNASE"/>
</dbReference>
<dbReference type="SUPFAM" id="SSF52540">
    <property type="entry name" value="P-loop containing nucleoside triphosphate hydrolases"/>
    <property type="match status" value="1"/>
</dbReference>
<dbReference type="PROSITE" id="PS01128">
    <property type="entry name" value="SHIKIMATE_KINASE"/>
    <property type="match status" value="1"/>
</dbReference>
<sequence length="183" mass="20190">MSKRDNLYLVGLMGAGKTTVGRLLAKHYGCTFYDSDHEIEARTGVKIPVIFEIEGEAGFRRREEAVIAELTTLSGIVLATGGGAVLSPANREHLRTNGLVIYLRGSPEQLCERTRNDRNRPLLQTGNPLAKLRELYQQRDPIYRELADVTVDTARQSVAGMTRVLYGKLDLLKGEATSFDPAG</sequence>
<reference key="1">
    <citation type="journal article" date="2006" name="J. Bacteriol.">
        <title>The genome sequence of the obligately chemolithoautotrophic, facultatively anaerobic bacterium Thiobacillus denitrificans.</title>
        <authorList>
            <person name="Beller H.R."/>
            <person name="Chain P.S."/>
            <person name="Letain T.E."/>
            <person name="Chakicherla A."/>
            <person name="Larimer F.W."/>
            <person name="Richardson P.M."/>
            <person name="Coleman M.A."/>
            <person name="Wood A.P."/>
            <person name="Kelly D.P."/>
        </authorList>
    </citation>
    <scope>NUCLEOTIDE SEQUENCE [LARGE SCALE GENOMIC DNA]</scope>
    <source>
        <strain>ATCC 25259 / T1</strain>
    </source>
</reference>
<comment type="function">
    <text evidence="1">Catalyzes the specific phosphorylation of the 3-hydroxyl group of shikimic acid using ATP as a cosubstrate.</text>
</comment>
<comment type="catalytic activity">
    <reaction evidence="1">
        <text>shikimate + ATP = 3-phosphoshikimate + ADP + H(+)</text>
        <dbReference type="Rhea" id="RHEA:13121"/>
        <dbReference type="ChEBI" id="CHEBI:15378"/>
        <dbReference type="ChEBI" id="CHEBI:30616"/>
        <dbReference type="ChEBI" id="CHEBI:36208"/>
        <dbReference type="ChEBI" id="CHEBI:145989"/>
        <dbReference type="ChEBI" id="CHEBI:456216"/>
        <dbReference type="EC" id="2.7.1.71"/>
    </reaction>
</comment>
<comment type="cofactor">
    <cofactor evidence="1">
        <name>Mg(2+)</name>
        <dbReference type="ChEBI" id="CHEBI:18420"/>
    </cofactor>
    <text evidence="1">Binds 1 Mg(2+) ion per subunit.</text>
</comment>
<comment type="pathway">
    <text evidence="1">Metabolic intermediate biosynthesis; chorismate biosynthesis; chorismate from D-erythrose 4-phosphate and phosphoenolpyruvate: step 5/7.</text>
</comment>
<comment type="subunit">
    <text evidence="1">Monomer.</text>
</comment>
<comment type="subcellular location">
    <subcellularLocation>
        <location evidence="1">Cytoplasm</location>
    </subcellularLocation>
</comment>
<comment type="similarity">
    <text evidence="1">Belongs to the shikimate kinase family.</text>
</comment>
<feature type="chain" id="PRO_0000237954" description="Shikimate kinase">
    <location>
        <begin position="1"/>
        <end position="183"/>
    </location>
</feature>
<feature type="binding site" evidence="1">
    <location>
        <begin position="14"/>
        <end position="19"/>
    </location>
    <ligand>
        <name>ATP</name>
        <dbReference type="ChEBI" id="CHEBI:30616"/>
    </ligand>
</feature>
<feature type="binding site" evidence="1">
    <location>
        <position position="18"/>
    </location>
    <ligand>
        <name>Mg(2+)</name>
        <dbReference type="ChEBI" id="CHEBI:18420"/>
    </ligand>
</feature>
<feature type="binding site" evidence="1">
    <location>
        <position position="36"/>
    </location>
    <ligand>
        <name>substrate</name>
    </ligand>
</feature>
<feature type="binding site" evidence="1">
    <location>
        <position position="60"/>
    </location>
    <ligand>
        <name>substrate</name>
    </ligand>
</feature>
<feature type="binding site" evidence="1">
    <location>
        <position position="82"/>
    </location>
    <ligand>
        <name>substrate</name>
    </ligand>
</feature>
<feature type="binding site" evidence="1">
    <location>
        <position position="120"/>
    </location>
    <ligand>
        <name>ATP</name>
        <dbReference type="ChEBI" id="CHEBI:30616"/>
    </ligand>
</feature>
<feature type="binding site" evidence="1">
    <location>
        <position position="139"/>
    </location>
    <ligand>
        <name>substrate</name>
    </ligand>
</feature>
<feature type="binding site" evidence="1">
    <location>
        <position position="156"/>
    </location>
    <ligand>
        <name>ATP</name>
        <dbReference type="ChEBI" id="CHEBI:30616"/>
    </ligand>
</feature>
<proteinExistence type="inferred from homology"/>
<gene>
    <name evidence="1" type="primary">aroK</name>
    <name type="ordered locus">Tbd_0207</name>
</gene>
<evidence type="ECO:0000255" key="1">
    <source>
        <dbReference type="HAMAP-Rule" id="MF_00109"/>
    </source>
</evidence>
<accession>Q3SM89</accession>